<gene>
    <name evidence="1" type="primary">rpsB</name>
    <name type="ordered locus">Jann_2306</name>
</gene>
<name>RS2_JANSC</name>
<organism>
    <name type="scientific">Jannaschia sp. (strain CCS1)</name>
    <dbReference type="NCBI Taxonomy" id="290400"/>
    <lineage>
        <taxon>Bacteria</taxon>
        <taxon>Pseudomonadati</taxon>
        <taxon>Pseudomonadota</taxon>
        <taxon>Alphaproteobacteria</taxon>
        <taxon>Rhodobacterales</taxon>
        <taxon>Roseobacteraceae</taxon>
        <taxon>Jannaschia</taxon>
    </lineage>
</organism>
<evidence type="ECO:0000255" key="1">
    <source>
        <dbReference type="HAMAP-Rule" id="MF_00291"/>
    </source>
</evidence>
<evidence type="ECO:0000256" key="2">
    <source>
        <dbReference type="SAM" id="MobiDB-lite"/>
    </source>
</evidence>
<evidence type="ECO:0000305" key="3"/>
<protein>
    <recommendedName>
        <fullName evidence="1">Small ribosomal subunit protein uS2</fullName>
    </recommendedName>
    <alternativeName>
        <fullName evidence="3">30S ribosomal protein S2</fullName>
    </alternativeName>
</protein>
<proteinExistence type="inferred from homology"/>
<comment type="similarity">
    <text evidence="1">Belongs to the universal ribosomal protein uS2 family.</text>
</comment>
<reference key="1">
    <citation type="submission" date="2006-02" db="EMBL/GenBank/DDBJ databases">
        <title>Complete sequence of chromosome of Jannaschia sp. CCS1.</title>
        <authorList>
            <consortium name="US DOE Joint Genome Institute"/>
            <person name="Copeland A."/>
            <person name="Lucas S."/>
            <person name="Lapidus A."/>
            <person name="Barry K."/>
            <person name="Detter J.C."/>
            <person name="Glavina del Rio T."/>
            <person name="Hammon N."/>
            <person name="Israni S."/>
            <person name="Pitluck S."/>
            <person name="Brettin T."/>
            <person name="Bruce D."/>
            <person name="Han C."/>
            <person name="Tapia R."/>
            <person name="Gilna P."/>
            <person name="Chertkov O."/>
            <person name="Saunders E."/>
            <person name="Schmutz J."/>
            <person name="Larimer F."/>
            <person name="Land M."/>
            <person name="Kyrpides N."/>
            <person name="Lykidis A."/>
            <person name="Moran M.A."/>
            <person name="Belas R."/>
            <person name="Ye W."/>
            <person name="Buchan A."/>
            <person name="Gonzalez J.M."/>
            <person name="Schell M.A."/>
            <person name="Richardson P."/>
        </authorList>
    </citation>
    <scope>NUCLEOTIDE SEQUENCE [LARGE SCALE GENOMIC DNA]</scope>
    <source>
        <strain>CCS1</strain>
    </source>
</reference>
<feature type="chain" id="PRO_1000003980" description="Small ribosomal subunit protein uS2">
    <location>
        <begin position="1"/>
        <end position="276"/>
    </location>
</feature>
<feature type="region of interest" description="Disordered" evidence="2">
    <location>
        <begin position="251"/>
        <end position="276"/>
    </location>
</feature>
<feature type="compositionally biased region" description="Low complexity" evidence="2">
    <location>
        <begin position="252"/>
        <end position="276"/>
    </location>
</feature>
<sequence>MALPEFSMRQLLEAGVHFGHQTQRWNPRMGEFIYGDRNGIHILDLTQTHPMLEQALQVVRETVAKGGRILFVGTKRQAQKPVADAAERCAQYYMNHRWLGGTLTNWKTVSNSISRLKEIDEKTADGSLEGLTKKERLGMERDQIKLQASLGGIREMGGLPDLIFVIDVNKEDLAIAEAKKLGIPVVAVVDTNCSPDGVDYIIPGNDDAARAIALYCDLISRAALDGMSTQLETAGVDLGALEEGSVEEAIAEEAPAAAEEAPAAEPAAEETPAAEA</sequence>
<dbReference type="EMBL" id="CP000264">
    <property type="protein sequence ID" value="ABD55223.1"/>
    <property type="molecule type" value="Genomic_DNA"/>
</dbReference>
<dbReference type="RefSeq" id="WP_011455427.1">
    <property type="nucleotide sequence ID" value="NC_007802.1"/>
</dbReference>
<dbReference type="SMR" id="Q28PY9"/>
<dbReference type="STRING" id="290400.Jann_2306"/>
<dbReference type="KEGG" id="jan:Jann_2306"/>
<dbReference type="eggNOG" id="COG0052">
    <property type="taxonomic scope" value="Bacteria"/>
</dbReference>
<dbReference type="HOGENOM" id="CLU_040318_1_2_5"/>
<dbReference type="OrthoDB" id="9808036at2"/>
<dbReference type="Proteomes" id="UP000008326">
    <property type="component" value="Chromosome"/>
</dbReference>
<dbReference type="GO" id="GO:0022627">
    <property type="term" value="C:cytosolic small ribosomal subunit"/>
    <property type="evidence" value="ECO:0007669"/>
    <property type="project" value="TreeGrafter"/>
</dbReference>
<dbReference type="GO" id="GO:0003735">
    <property type="term" value="F:structural constituent of ribosome"/>
    <property type="evidence" value="ECO:0007669"/>
    <property type="project" value="InterPro"/>
</dbReference>
<dbReference type="GO" id="GO:0006412">
    <property type="term" value="P:translation"/>
    <property type="evidence" value="ECO:0007669"/>
    <property type="project" value="UniProtKB-UniRule"/>
</dbReference>
<dbReference type="CDD" id="cd01425">
    <property type="entry name" value="RPS2"/>
    <property type="match status" value="1"/>
</dbReference>
<dbReference type="FunFam" id="1.10.287.610:FF:000001">
    <property type="entry name" value="30S ribosomal protein S2"/>
    <property type="match status" value="1"/>
</dbReference>
<dbReference type="Gene3D" id="3.40.50.10490">
    <property type="entry name" value="Glucose-6-phosphate isomerase like protein, domain 1"/>
    <property type="match status" value="1"/>
</dbReference>
<dbReference type="Gene3D" id="1.10.287.610">
    <property type="entry name" value="Helix hairpin bin"/>
    <property type="match status" value="1"/>
</dbReference>
<dbReference type="HAMAP" id="MF_00291_B">
    <property type="entry name" value="Ribosomal_uS2_B"/>
    <property type="match status" value="1"/>
</dbReference>
<dbReference type="InterPro" id="IPR001865">
    <property type="entry name" value="Ribosomal_uS2"/>
</dbReference>
<dbReference type="InterPro" id="IPR005706">
    <property type="entry name" value="Ribosomal_uS2_bac/mit/plastid"/>
</dbReference>
<dbReference type="InterPro" id="IPR018130">
    <property type="entry name" value="Ribosomal_uS2_CS"/>
</dbReference>
<dbReference type="InterPro" id="IPR023591">
    <property type="entry name" value="Ribosomal_uS2_flav_dom_sf"/>
</dbReference>
<dbReference type="NCBIfam" id="TIGR01011">
    <property type="entry name" value="rpsB_bact"/>
    <property type="match status" value="1"/>
</dbReference>
<dbReference type="PANTHER" id="PTHR12534">
    <property type="entry name" value="30S RIBOSOMAL PROTEIN S2 PROKARYOTIC AND ORGANELLAR"/>
    <property type="match status" value="1"/>
</dbReference>
<dbReference type="PANTHER" id="PTHR12534:SF0">
    <property type="entry name" value="SMALL RIBOSOMAL SUBUNIT PROTEIN US2M"/>
    <property type="match status" value="1"/>
</dbReference>
<dbReference type="Pfam" id="PF00318">
    <property type="entry name" value="Ribosomal_S2"/>
    <property type="match status" value="1"/>
</dbReference>
<dbReference type="PRINTS" id="PR00395">
    <property type="entry name" value="RIBOSOMALS2"/>
</dbReference>
<dbReference type="SUPFAM" id="SSF52313">
    <property type="entry name" value="Ribosomal protein S2"/>
    <property type="match status" value="1"/>
</dbReference>
<dbReference type="PROSITE" id="PS00962">
    <property type="entry name" value="RIBOSOMAL_S2_1"/>
    <property type="match status" value="1"/>
</dbReference>
<dbReference type="PROSITE" id="PS00963">
    <property type="entry name" value="RIBOSOMAL_S2_2"/>
    <property type="match status" value="1"/>
</dbReference>
<keyword id="KW-1185">Reference proteome</keyword>
<keyword id="KW-0687">Ribonucleoprotein</keyword>
<keyword id="KW-0689">Ribosomal protein</keyword>
<accession>Q28PY9</accession>